<keyword id="KW-0238">DNA-binding</keyword>
<keyword id="KW-0479">Metal-binding</keyword>
<keyword id="KW-0539">Nucleus</keyword>
<keyword id="KW-1185">Reference proteome</keyword>
<keyword id="KW-0804">Transcription</keyword>
<keyword id="KW-0805">Transcription regulation</keyword>
<keyword id="KW-0862">Zinc</keyword>
<protein>
    <recommendedName>
        <fullName evidence="7">Transcription factor FBD3</fullName>
    </recommendedName>
    <alternativeName>
        <fullName evidence="6">Fusarium detoxification of benzoxazolinone cluster protein 3</fullName>
        <shortName evidence="6">FDB cluster protein 3</shortName>
    </alternativeName>
</protein>
<feature type="chain" id="PRO_0000454602" description="Transcription factor FBD3">
    <location>
        <begin position="1"/>
        <end position="757"/>
    </location>
</feature>
<feature type="DNA-binding region" description="Zn(2)-C6 fungal-type" evidence="2">
    <location>
        <begin position="31"/>
        <end position="58"/>
    </location>
</feature>
<feature type="region of interest" description="Disordered" evidence="3">
    <location>
        <begin position="1"/>
        <end position="24"/>
    </location>
</feature>
<feature type="region of interest" description="Disordered" evidence="3">
    <location>
        <begin position="106"/>
        <end position="161"/>
    </location>
</feature>
<feature type="region of interest" description="Disordered" evidence="3">
    <location>
        <begin position="202"/>
        <end position="222"/>
    </location>
</feature>
<feature type="compositionally biased region" description="Basic and acidic residues" evidence="3">
    <location>
        <begin position="111"/>
        <end position="120"/>
    </location>
</feature>
<feature type="compositionally biased region" description="Polar residues" evidence="3">
    <location>
        <begin position="125"/>
        <end position="135"/>
    </location>
</feature>
<sequence>MSSKRLSQNEQEKSPGTGPPTHKRRRIGLACNACRMRKSRCDGHRPSCSSCLSLGVNCLYEPGDSTTNVIVRKDYVSDLEQRVASVEHNLQRLNDVLKGHLSPCTGGTDSNNHHNNHDSPCHQPTIAQSITSSRPNTRDKSAANETCATGLEEPDDEDANTNGMAMTFVEEKTSVYYGEASNINFTQLLLRALATVHGATPVAPSASNQASGPGDGVTTDVPQNQHAVSASDLATSESSPTALPSVQEMDSLLDIYFDTAGVVFPFICEDTMRRTYNECRHNGFTRARRTWLGTLNMIFALASCLSSSAKVRFERCNVFYKRAMALCGELSKRVVSLEIVHYLILVVLHCQGTQRSIQAWNNHGLAIRSAMALGLHCQSSGVSLDSAQQEYRRRTWVIIYCLDKVLSTAFGRPASIADEQMHSFNGRESVMGLSPMSLSNPQVPVDLPGDFLSVSFRLYQVMSKSLAEQYGTNLDHVDSGHDDMAPLKASGELRKQLRLWAGSLPGHLHVCQPEDEFLAHNTRGNRLRVILTLRYHNLGILIHKPLLSTTIRHLFQAGNRMEAPPSYMIQLAMAEAHECLRSAQLTIDIVYAVISADPTPENNLGAWYFTLYYVFTASLVVSGRLLWAQHGQSIVDEVAVDHCKSLLSKAEEIFKKLDRKNSLVLSCLEYIARLARICSMKDVPPNHQNGSLDITSDTTNTASGVTDTMPLDEDGMDAFQLFAAEMFDPNIFKGFNLSPVEGVSFTDGIWEGFPCGG</sequence>
<name>FDB3_FUSPC</name>
<evidence type="ECO:0000250" key="1">
    <source>
        <dbReference type="UniProtKB" id="W7MLD5"/>
    </source>
</evidence>
<evidence type="ECO:0000255" key="2">
    <source>
        <dbReference type="PROSITE-ProRule" id="PRU00227"/>
    </source>
</evidence>
<evidence type="ECO:0000256" key="3">
    <source>
        <dbReference type="SAM" id="MobiDB-lite"/>
    </source>
</evidence>
<evidence type="ECO:0000269" key="4">
    <source>
    </source>
</evidence>
<evidence type="ECO:0000269" key="5">
    <source>
    </source>
</evidence>
<evidence type="ECO:0000303" key="6">
    <source>
    </source>
</evidence>
<evidence type="ECO:0000303" key="7">
    <source>
    </source>
</evidence>
<dbReference type="EMBL" id="CM003199">
    <property type="protein sequence ID" value="EKJ71676.1"/>
    <property type="molecule type" value="Genomic_DNA"/>
</dbReference>
<dbReference type="RefSeq" id="XP_009259515.1">
    <property type="nucleotide sequence ID" value="XM_009261240.1"/>
</dbReference>
<dbReference type="SMR" id="K3UIH8"/>
<dbReference type="EnsemblFungi" id="EKJ71676">
    <property type="protein sequence ID" value="EKJ71676"/>
    <property type="gene ID" value="FPSE_08122"/>
</dbReference>
<dbReference type="GeneID" id="20366740"/>
<dbReference type="KEGG" id="fpu:FPSE_08122"/>
<dbReference type="eggNOG" id="ENOG502S0D7">
    <property type="taxonomic scope" value="Eukaryota"/>
</dbReference>
<dbReference type="HOGENOM" id="CLU_008511_0_0_1"/>
<dbReference type="OrthoDB" id="3364175at2759"/>
<dbReference type="Proteomes" id="UP000007978">
    <property type="component" value="Chromosome 2"/>
</dbReference>
<dbReference type="GO" id="GO:0005634">
    <property type="term" value="C:nucleus"/>
    <property type="evidence" value="ECO:0007669"/>
    <property type="project" value="UniProtKB-SubCell"/>
</dbReference>
<dbReference type="GO" id="GO:0000981">
    <property type="term" value="F:DNA-binding transcription factor activity, RNA polymerase II-specific"/>
    <property type="evidence" value="ECO:0007669"/>
    <property type="project" value="InterPro"/>
</dbReference>
<dbReference type="GO" id="GO:0000978">
    <property type="term" value="F:RNA polymerase II cis-regulatory region sequence-specific DNA binding"/>
    <property type="evidence" value="ECO:0007669"/>
    <property type="project" value="TreeGrafter"/>
</dbReference>
<dbReference type="GO" id="GO:0008270">
    <property type="term" value="F:zinc ion binding"/>
    <property type="evidence" value="ECO:0007669"/>
    <property type="project" value="InterPro"/>
</dbReference>
<dbReference type="GO" id="GO:0006351">
    <property type="term" value="P:DNA-templated transcription"/>
    <property type="evidence" value="ECO:0007669"/>
    <property type="project" value="InterPro"/>
</dbReference>
<dbReference type="GO" id="GO:0000435">
    <property type="term" value="P:positive regulation of transcription from RNA polymerase II promoter by galactose"/>
    <property type="evidence" value="ECO:0007669"/>
    <property type="project" value="TreeGrafter"/>
</dbReference>
<dbReference type="CDD" id="cd12148">
    <property type="entry name" value="fungal_TF_MHR"/>
    <property type="match status" value="1"/>
</dbReference>
<dbReference type="CDD" id="cd00067">
    <property type="entry name" value="GAL4"/>
    <property type="match status" value="1"/>
</dbReference>
<dbReference type="Gene3D" id="4.10.240.10">
    <property type="entry name" value="Zn(2)-C6 fungal-type DNA-binding domain"/>
    <property type="match status" value="1"/>
</dbReference>
<dbReference type="InterPro" id="IPR051127">
    <property type="entry name" value="Fungal_SecMet_Regulators"/>
</dbReference>
<dbReference type="InterPro" id="IPR007219">
    <property type="entry name" value="Transcription_factor_dom_fun"/>
</dbReference>
<dbReference type="InterPro" id="IPR036864">
    <property type="entry name" value="Zn2-C6_fun-type_DNA-bd_sf"/>
</dbReference>
<dbReference type="InterPro" id="IPR001138">
    <property type="entry name" value="Zn2Cys6_DnaBD"/>
</dbReference>
<dbReference type="PANTHER" id="PTHR47424">
    <property type="entry name" value="REGULATORY PROTEIN GAL4"/>
    <property type="match status" value="1"/>
</dbReference>
<dbReference type="PANTHER" id="PTHR47424:SF3">
    <property type="entry name" value="REGULATORY PROTEIN GAL4"/>
    <property type="match status" value="1"/>
</dbReference>
<dbReference type="Pfam" id="PF04082">
    <property type="entry name" value="Fungal_trans"/>
    <property type="match status" value="1"/>
</dbReference>
<dbReference type="Pfam" id="PF00172">
    <property type="entry name" value="Zn_clus"/>
    <property type="match status" value="1"/>
</dbReference>
<dbReference type="SMART" id="SM00906">
    <property type="entry name" value="Fungal_trans"/>
    <property type="match status" value="1"/>
</dbReference>
<dbReference type="SMART" id="SM00066">
    <property type="entry name" value="GAL4"/>
    <property type="match status" value="1"/>
</dbReference>
<dbReference type="SUPFAM" id="SSF57701">
    <property type="entry name" value="Zn2/Cys6 DNA-binding domain"/>
    <property type="match status" value="1"/>
</dbReference>
<dbReference type="PROSITE" id="PS00463">
    <property type="entry name" value="ZN2_CY6_FUNGAL_1"/>
    <property type="match status" value="1"/>
</dbReference>
<dbReference type="PROSITE" id="PS50048">
    <property type="entry name" value="ZN2_CY6_FUNGAL_2"/>
    <property type="match status" value="1"/>
</dbReference>
<comment type="function">
    <text evidence="1 4 5">Transcription factor; part of the Fusarium detoxification of benzoxazolinone cluster involved in the degradation of benzoxazolinones produced by the host plant (PubMed:25727347, PubMed:26828593). Maize, wheat, and rye produce the 2 benzoxazinone phytoanticipins 2,4-dihy-droxy-7-methoxy-1,4-benzoxazin-3-one (DIMBOA) and 2,4-dihydroxy-1,4-benzoxazin-3-one (DIBOA) that, due to their inherent instability once released, spontaneously degrade to the more stable corresponding benzoxazolinones, 6-methoxy-2-benzoxazolinone (MBOA) and 2-benzoxazolinone (BOA), respectively (By similarity). FDB3 controls the transcription of the FDB gene cluster in response to 6-methoxy-2-benzoxazolinone (MBOA) (PubMed:26828593).</text>
</comment>
<comment type="subcellular location">
    <subcellularLocation>
        <location evidence="2">Nucleus</location>
    </subcellularLocation>
</comment>
<comment type="induction">
    <text evidence="4 5">Expression is induced in response to 2-benzoxasolinone (BOA) exposure (PubMed:25727347). Expression is also induced in response to 6-methoxy-2-benzoxazolinone (MBOA) and 2-aminophenol (2-AP) treatment (PubMed:26828593).</text>
</comment>
<comment type="disruption phenotype">
    <text evidence="5">Reduces significantly the induction of the FBD cluster genes in response to 6-methoxy-2-benzoxazolinone (MBOA) treatment (PubMed:26828593). Impairs the degradation of MBOA but does not affect the degradation of BOA and 2-aminophenol (2-AP) (PubMed:26828593).</text>
</comment>
<gene>
    <name evidence="7" type="primary">FDB3</name>
    <name type="ORF">FPSE_08122</name>
</gene>
<organism>
    <name type="scientific">Fusarium pseudograminearum (strain CS3096)</name>
    <name type="common">Wheat and barley crown-rot fungus</name>
    <dbReference type="NCBI Taxonomy" id="1028729"/>
    <lineage>
        <taxon>Eukaryota</taxon>
        <taxon>Fungi</taxon>
        <taxon>Dikarya</taxon>
        <taxon>Ascomycota</taxon>
        <taxon>Pezizomycotina</taxon>
        <taxon>Sordariomycetes</taxon>
        <taxon>Hypocreomycetidae</taxon>
        <taxon>Hypocreales</taxon>
        <taxon>Nectriaceae</taxon>
        <taxon>Fusarium</taxon>
    </lineage>
</organism>
<accession>K3UIH8</accession>
<proteinExistence type="evidence at transcript level"/>
<reference key="1">
    <citation type="journal article" date="2012" name="PLoS Pathog.">
        <title>Comparative pathogenomics reveals horizontally acquired novel virulence genes in fungi infecting cereal hosts.</title>
        <authorList>
            <person name="Gardiner D.M."/>
            <person name="McDonald M.C."/>
            <person name="Covarelli L."/>
            <person name="Solomon P.S."/>
            <person name="Rusu A.G."/>
            <person name="Marshall M."/>
            <person name="Kazan K."/>
            <person name="Chakraborty S."/>
            <person name="McDonald B.A."/>
            <person name="Manners J.M."/>
        </authorList>
    </citation>
    <scope>NUCLEOTIDE SEQUENCE [LARGE SCALE GENOMIC DNA]</scope>
    <source>
        <strain>CS3096</strain>
    </source>
</reference>
<reference key="2">
    <citation type="journal article" date="2015" name="Mol. Plant Pathol.">
        <title>Degradation of the benzoxazolinone class of phytoalexins is important for virulence of Fusarium pseudograminearum towards wheat.</title>
        <authorList>
            <person name="Kettle A.J."/>
            <person name="Batley J."/>
            <person name="Benfield A.H."/>
            <person name="Manners J.M."/>
            <person name="Kazan K."/>
            <person name="Gardiner D.M."/>
        </authorList>
    </citation>
    <scope>FUNCTION</scope>
    <scope>INDUCTION</scope>
</reference>
<reference key="3">
    <citation type="journal article" date="2016" name="Fungal Genet. Biol.">
        <title>The Fdb3 transcription factor of the Fusarium Detoxification of Benzoxazolinone gene cluster is required for MBOA but not BOA degradation in Fusarium pseudograminearum.</title>
        <authorList>
            <person name="Kettle A.J."/>
            <person name="Carere J."/>
            <person name="Batley J."/>
            <person name="Manners J.M."/>
            <person name="Kazan K."/>
            <person name="Gardiner D.M."/>
        </authorList>
    </citation>
    <scope>FUNCTION</scope>
    <scope>INDUCTION</scope>
    <scope>DISRUPTION PHENOTYPE</scope>
</reference>